<accession>Q54BZ8</accession>
<dbReference type="EMBL" id="AAFI02000201">
    <property type="protein sequence ID" value="EAL60781.1"/>
    <property type="molecule type" value="Genomic_DNA"/>
</dbReference>
<dbReference type="RefSeq" id="XP_629193.1">
    <property type="nucleotide sequence ID" value="XM_629191.1"/>
</dbReference>
<dbReference type="FunCoup" id="Q54BZ8">
    <property type="interactions" value="640"/>
</dbReference>
<dbReference type="PaxDb" id="44689-DDB0266570"/>
<dbReference type="EnsemblProtists" id="EAL60781">
    <property type="protein sequence ID" value="EAL60781"/>
    <property type="gene ID" value="DDB_G0293314"/>
</dbReference>
<dbReference type="GeneID" id="8629152"/>
<dbReference type="KEGG" id="ddi:DDB_G0293314"/>
<dbReference type="dictyBase" id="DDB_G0293314"/>
<dbReference type="HOGENOM" id="CLU_194865_0_0_1"/>
<dbReference type="InParanoid" id="Q54BZ8"/>
<dbReference type="PRO" id="PR:Q54BZ8"/>
<dbReference type="Proteomes" id="UP000002195">
    <property type="component" value="Chromosome 6"/>
</dbReference>
<gene>
    <name type="ORF">DDB_G0293314</name>
</gene>
<sequence length="95" mass="9119">MAIFKSISSISNSTGSMGSSIGASNLNGFASNDNSISCFDGGCGGSGGSGGSGGLAGWSGLSGWGGIGGFNGSCGGSNANIINIDIDIGRRRRCC</sequence>
<name>U512H_DICDI</name>
<proteinExistence type="inferred from homology"/>
<evidence type="ECO:0000305" key="1"/>
<keyword id="KW-1185">Reference proteome</keyword>
<feature type="chain" id="PRO_0000317346" description="UPF0512 protein H">
    <location>
        <begin position="1"/>
        <end position="95"/>
    </location>
</feature>
<protein>
    <recommendedName>
        <fullName>UPF0512 protein H</fullName>
    </recommendedName>
</protein>
<comment type="similarity">
    <text evidence="1">Belongs to the UPF0512 family.</text>
</comment>
<reference key="1">
    <citation type="journal article" date="2005" name="Nature">
        <title>The genome of the social amoeba Dictyostelium discoideum.</title>
        <authorList>
            <person name="Eichinger L."/>
            <person name="Pachebat J.A."/>
            <person name="Gloeckner G."/>
            <person name="Rajandream M.A."/>
            <person name="Sucgang R."/>
            <person name="Berriman M."/>
            <person name="Song J."/>
            <person name="Olsen R."/>
            <person name="Szafranski K."/>
            <person name="Xu Q."/>
            <person name="Tunggal B."/>
            <person name="Kummerfeld S."/>
            <person name="Madera M."/>
            <person name="Konfortov B.A."/>
            <person name="Rivero F."/>
            <person name="Bankier A.T."/>
            <person name="Lehmann R."/>
            <person name="Hamlin N."/>
            <person name="Davies R."/>
            <person name="Gaudet P."/>
            <person name="Fey P."/>
            <person name="Pilcher K."/>
            <person name="Chen G."/>
            <person name="Saunders D."/>
            <person name="Sodergren E.J."/>
            <person name="Davis P."/>
            <person name="Kerhornou A."/>
            <person name="Nie X."/>
            <person name="Hall N."/>
            <person name="Anjard C."/>
            <person name="Hemphill L."/>
            <person name="Bason N."/>
            <person name="Farbrother P."/>
            <person name="Desany B."/>
            <person name="Just E."/>
            <person name="Morio T."/>
            <person name="Rost R."/>
            <person name="Churcher C.M."/>
            <person name="Cooper J."/>
            <person name="Haydock S."/>
            <person name="van Driessche N."/>
            <person name="Cronin A."/>
            <person name="Goodhead I."/>
            <person name="Muzny D.M."/>
            <person name="Mourier T."/>
            <person name="Pain A."/>
            <person name="Lu M."/>
            <person name="Harper D."/>
            <person name="Lindsay R."/>
            <person name="Hauser H."/>
            <person name="James K.D."/>
            <person name="Quiles M."/>
            <person name="Madan Babu M."/>
            <person name="Saito T."/>
            <person name="Buchrieser C."/>
            <person name="Wardroper A."/>
            <person name="Felder M."/>
            <person name="Thangavelu M."/>
            <person name="Johnson D."/>
            <person name="Knights A."/>
            <person name="Loulseged H."/>
            <person name="Mungall K.L."/>
            <person name="Oliver K."/>
            <person name="Price C."/>
            <person name="Quail M.A."/>
            <person name="Urushihara H."/>
            <person name="Hernandez J."/>
            <person name="Rabbinowitsch E."/>
            <person name="Steffen D."/>
            <person name="Sanders M."/>
            <person name="Ma J."/>
            <person name="Kohara Y."/>
            <person name="Sharp S."/>
            <person name="Simmonds M.N."/>
            <person name="Spiegler S."/>
            <person name="Tivey A."/>
            <person name="Sugano S."/>
            <person name="White B."/>
            <person name="Walker D."/>
            <person name="Woodward J.R."/>
            <person name="Winckler T."/>
            <person name="Tanaka Y."/>
            <person name="Shaulsky G."/>
            <person name="Schleicher M."/>
            <person name="Weinstock G.M."/>
            <person name="Rosenthal A."/>
            <person name="Cox E.C."/>
            <person name="Chisholm R.L."/>
            <person name="Gibbs R.A."/>
            <person name="Loomis W.F."/>
            <person name="Platzer M."/>
            <person name="Kay R.R."/>
            <person name="Williams J.G."/>
            <person name="Dear P.H."/>
            <person name="Noegel A.A."/>
            <person name="Barrell B.G."/>
            <person name="Kuspa A."/>
        </authorList>
    </citation>
    <scope>NUCLEOTIDE SEQUENCE [LARGE SCALE GENOMIC DNA]</scope>
    <source>
        <strain>AX4</strain>
    </source>
</reference>
<organism>
    <name type="scientific">Dictyostelium discoideum</name>
    <name type="common">Social amoeba</name>
    <dbReference type="NCBI Taxonomy" id="44689"/>
    <lineage>
        <taxon>Eukaryota</taxon>
        <taxon>Amoebozoa</taxon>
        <taxon>Evosea</taxon>
        <taxon>Eumycetozoa</taxon>
        <taxon>Dictyostelia</taxon>
        <taxon>Dictyosteliales</taxon>
        <taxon>Dictyosteliaceae</taxon>
        <taxon>Dictyostelium</taxon>
    </lineage>
</organism>